<feature type="initiator methionine" description="Removed" evidence="1">
    <location>
        <position position="1"/>
    </location>
</feature>
<feature type="chain" id="PRO_0000210905" description="Nucleoid-associated protein YejK">
    <location>
        <begin position="2"/>
        <end position="335"/>
    </location>
</feature>
<name>NDPA_ECOL6</name>
<comment type="subcellular location">
    <subcellularLocation>
        <location evidence="2">Cytoplasm</location>
        <location evidence="2">Nucleoid</location>
    </subcellularLocation>
</comment>
<comment type="similarity">
    <text evidence="2">Belongs to the YejK family.</text>
</comment>
<keyword id="KW-0963">Cytoplasm</keyword>
<keyword id="KW-1185">Reference proteome</keyword>
<accession>Q8FFR9</accession>
<evidence type="ECO:0000250" key="1"/>
<evidence type="ECO:0000255" key="2">
    <source>
        <dbReference type="HAMAP-Rule" id="MF_00730"/>
    </source>
</evidence>
<proteinExistence type="inferred from homology"/>
<protein>
    <recommendedName>
        <fullName evidence="2">Nucleoid-associated protein YejK</fullName>
    </recommendedName>
</protein>
<gene>
    <name evidence="2" type="primary">yejK</name>
    <name type="ordered locus">c2724</name>
</gene>
<dbReference type="EMBL" id="AE014075">
    <property type="protein sequence ID" value="AAN81178.1"/>
    <property type="molecule type" value="Genomic_DNA"/>
</dbReference>
<dbReference type="RefSeq" id="WP_000050789.1">
    <property type="nucleotide sequence ID" value="NZ_CP051263.1"/>
</dbReference>
<dbReference type="SMR" id="Q8FFR9"/>
<dbReference type="STRING" id="199310.c2724"/>
<dbReference type="GeneID" id="75206440"/>
<dbReference type="KEGG" id="ecc:c2724"/>
<dbReference type="eggNOG" id="COG3081">
    <property type="taxonomic scope" value="Bacteria"/>
</dbReference>
<dbReference type="HOGENOM" id="CLU_063050_0_1_6"/>
<dbReference type="BioCyc" id="ECOL199310:C2724-MONOMER"/>
<dbReference type="Proteomes" id="UP000001410">
    <property type="component" value="Chromosome"/>
</dbReference>
<dbReference type="GO" id="GO:0043590">
    <property type="term" value="C:bacterial nucleoid"/>
    <property type="evidence" value="ECO:0007669"/>
    <property type="project" value="TreeGrafter"/>
</dbReference>
<dbReference type="GO" id="GO:0005737">
    <property type="term" value="C:cytoplasm"/>
    <property type="evidence" value="ECO:0007669"/>
    <property type="project" value="UniProtKB-UniRule"/>
</dbReference>
<dbReference type="GO" id="GO:0003690">
    <property type="term" value="F:double-stranded DNA binding"/>
    <property type="evidence" value="ECO:0007669"/>
    <property type="project" value="TreeGrafter"/>
</dbReference>
<dbReference type="GO" id="GO:0003727">
    <property type="term" value="F:single-stranded RNA binding"/>
    <property type="evidence" value="ECO:0007669"/>
    <property type="project" value="TreeGrafter"/>
</dbReference>
<dbReference type="HAMAP" id="MF_00730">
    <property type="entry name" value="NdpA"/>
    <property type="match status" value="1"/>
</dbReference>
<dbReference type="InterPro" id="IPR007358">
    <property type="entry name" value="Nucleoid_associated_NdpA"/>
</dbReference>
<dbReference type="NCBIfam" id="NF001557">
    <property type="entry name" value="PRK00378.1"/>
    <property type="match status" value="1"/>
</dbReference>
<dbReference type="PANTHER" id="PTHR38772">
    <property type="match status" value="1"/>
</dbReference>
<dbReference type="PANTHER" id="PTHR38772:SF1">
    <property type="entry name" value="NUCLEOID-ASSOCIATED PROTEIN YEJK"/>
    <property type="match status" value="1"/>
</dbReference>
<dbReference type="Pfam" id="PF04245">
    <property type="entry name" value="NA37"/>
    <property type="match status" value="1"/>
</dbReference>
<reference key="1">
    <citation type="journal article" date="2002" name="Proc. Natl. Acad. Sci. U.S.A.">
        <title>Extensive mosaic structure revealed by the complete genome sequence of uropathogenic Escherichia coli.</title>
        <authorList>
            <person name="Welch R.A."/>
            <person name="Burland V."/>
            <person name="Plunkett G. III"/>
            <person name="Redford P."/>
            <person name="Roesch P."/>
            <person name="Rasko D."/>
            <person name="Buckles E.L."/>
            <person name="Liou S.-R."/>
            <person name="Boutin A."/>
            <person name="Hackett J."/>
            <person name="Stroud D."/>
            <person name="Mayhew G.F."/>
            <person name="Rose D.J."/>
            <person name="Zhou S."/>
            <person name="Schwartz D.C."/>
            <person name="Perna N.T."/>
            <person name="Mobley H.L.T."/>
            <person name="Donnenberg M.S."/>
            <person name="Blattner F.R."/>
        </authorList>
    </citation>
    <scope>NUCLEOTIDE SEQUENCE [LARGE SCALE GENOMIC DNA]</scope>
    <source>
        <strain>CFT073 / ATCC 700928 / UPEC</strain>
    </source>
</reference>
<sequence>MSLDINQIALHQLIKRDEQNLELVLRDSLLEPTETVVEMVAELHRVYSAKNKAYGLFSEESELAQTLRLQRQGEEDFLAFSRAATGRLRDELAKYPFADGGFVLFCHYRYLAVEYLLVAVLSNLSSMRVNENLDINPTHYLDINHADIVARIDLTEWETNPESTRYLTFLKGRVGRKVADFFMDFLGASEGLNAKAQNRGLLQAVDDFTAEAQLDKAERQNVRQQVYSYCNEQLQAGEEIELESLSKELAGVSEVSFTEFAAEKGYELEESFPADRSTLRQLTKFAGSGGGLTINFDAMLLGERIFWDPATDTLTIKGTPPNLRDQLQRRTSGGN</sequence>
<organism>
    <name type="scientific">Escherichia coli O6:H1 (strain CFT073 / ATCC 700928 / UPEC)</name>
    <dbReference type="NCBI Taxonomy" id="199310"/>
    <lineage>
        <taxon>Bacteria</taxon>
        <taxon>Pseudomonadati</taxon>
        <taxon>Pseudomonadota</taxon>
        <taxon>Gammaproteobacteria</taxon>
        <taxon>Enterobacterales</taxon>
        <taxon>Enterobacteriaceae</taxon>
        <taxon>Escherichia</taxon>
    </lineage>
</organism>